<organism>
    <name type="scientific">Xylella fastidiosa (strain 9a5c)</name>
    <dbReference type="NCBI Taxonomy" id="160492"/>
    <lineage>
        <taxon>Bacteria</taxon>
        <taxon>Pseudomonadati</taxon>
        <taxon>Pseudomonadota</taxon>
        <taxon>Gammaproteobacteria</taxon>
        <taxon>Lysobacterales</taxon>
        <taxon>Lysobacteraceae</taxon>
        <taxon>Xylella</taxon>
    </lineage>
</organism>
<comment type="function">
    <text evidence="1">Catalyzes the transfer of the enolpyruvyl moiety of phosphoenolpyruvate (PEP) to the 5-hydroxyl of shikimate-3-phosphate (S3P) to produce enolpyruvyl shikimate-3-phosphate and inorganic phosphate.</text>
</comment>
<comment type="catalytic activity">
    <reaction evidence="1">
        <text>3-phosphoshikimate + phosphoenolpyruvate = 5-O-(1-carboxyvinyl)-3-phosphoshikimate + phosphate</text>
        <dbReference type="Rhea" id="RHEA:21256"/>
        <dbReference type="ChEBI" id="CHEBI:43474"/>
        <dbReference type="ChEBI" id="CHEBI:57701"/>
        <dbReference type="ChEBI" id="CHEBI:58702"/>
        <dbReference type="ChEBI" id="CHEBI:145989"/>
        <dbReference type="EC" id="2.5.1.19"/>
    </reaction>
    <physiologicalReaction direction="left-to-right" evidence="1">
        <dbReference type="Rhea" id="RHEA:21257"/>
    </physiologicalReaction>
</comment>
<comment type="pathway">
    <text evidence="1">Metabolic intermediate biosynthesis; chorismate biosynthesis; chorismate from D-erythrose 4-phosphate and phosphoenolpyruvate: step 6/7.</text>
</comment>
<comment type="subunit">
    <text evidence="1">Monomer.</text>
</comment>
<comment type="subcellular location">
    <subcellularLocation>
        <location evidence="1">Cytoplasm</location>
    </subcellularLocation>
</comment>
<comment type="similarity">
    <text evidence="1">Belongs to the EPSP synthase family.</text>
</comment>
<reference key="1">
    <citation type="journal article" date="2000" name="Nature">
        <title>The genome sequence of the plant pathogen Xylella fastidiosa.</title>
        <authorList>
            <person name="Simpson A.J.G."/>
            <person name="Reinach F.C."/>
            <person name="Arruda P."/>
            <person name="Abreu F.A."/>
            <person name="Acencio M."/>
            <person name="Alvarenga R."/>
            <person name="Alves L.M.C."/>
            <person name="Araya J.E."/>
            <person name="Baia G.S."/>
            <person name="Baptista C.S."/>
            <person name="Barros M.H."/>
            <person name="Bonaccorsi E.D."/>
            <person name="Bordin S."/>
            <person name="Bove J.M."/>
            <person name="Briones M.R.S."/>
            <person name="Bueno M.R.P."/>
            <person name="Camargo A.A."/>
            <person name="Camargo L.E.A."/>
            <person name="Carraro D.M."/>
            <person name="Carrer H."/>
            <person name="Colauto N.B."/>
            <person name="Colombo C."/>
            <person name="Costa F.F."/>
            <person name="Costa M.C.R."/>
            <person name="Costa-Neto C.M."/>
            <person name="Coutinho L.L."/>
            <person name="Cristofani M."/>
            <person name="Dias-Neto E."/>
            <person name="Docena C."/>
            <person name="El-Dorry H."/>
            <person name="Facincani A.P."/>
            <person name="Ferreira A.J.S."/>
            <person name="Ferreira V.C.A."/>
            <person name="Ferro J.A."/>
            <person name="Fraga J.S."/>
            <person name="Franca S.C."/>
            <person name="Franco M.C."/>
            <person name="Frohme M."/>
            <person name="Furlan L.R."/>
            <person name="Garnier M."/>
            <person name="Goldman G.H."/>
            <person name="Goldman M.H.S."/>
            <person name="Gomes S.L."/>
            <person name="Gruber A."/>
            <person name="Ho P.L."/>
            <person name="Hoheisel J.D."/>
            <person name="Junqueira M.L."/>
            <person name="Kemper E.L."/>
            <person name="Kitajima J.P."/>
            <person name="Krieger J.E."/>
            <person name="Kuramae E.E."/>
            <person name="Laigret F."/>
            <person name="Lambais M.R."/>
            <person name="Leite L.C.C."/>
            <person name="Lemos E.G.M."/>
            <person name="Lemos M.V.F."/>
            <person name="Lopes S.A."/>
            <person name="Lopes C.R."/>
            <person name="Machado J.A."/>
            <person name="Machado M.A."/>
            <person name="Madeira A.M.B.N."/>
            <person name="Madeira H.M.F."/>
            <person name="Marino C.L."/>
            <person name="Marques M.V."/>
            <person name="Martins E.A.L."/>
            <person name="Martins E.M.F."/>
            <person name="Matsukuma A.Y."/>
            <person name="Menck C.F.M."/>
            <person name="Miracca E.C."/>
            <person name="Miyaki C.Y."/>
            <person name="Monteiro-Vitorello C.B."/>
            <person name="Moon D.H."/>
            <person name="Nagai M.A."/>
            <person name="Nascimento A.L.T.O."/>
            <person name="Netto L.E.S."/>
            <person name="Nhani A. Jr."/>
            <person name="Nobrega F.G."/>
            <person name="Nunes L.R."/>
            <person name="Oliveira M.A."/>
            <person name="de Oliveira M.C."/>
            <person name="de Oliveira R.C."/>
            <person name="Palmieri D.A."/>
            <person name="Paris A."/>
            <person name="Peixoto B.R."/>
            <person name="Pereira G.A.G."/>
            <person name="Pereira H.A. Jr."/>
            <person name="Pesquero J.B."/>
            <person name="Quaggio R.B."/>
            <person name="Roberto P.G."/>
            <person name="Rodrigues V."/>
            <person name="de Rosa A.J.M."/>
            <person name="de Rosa V.E. Jr."/>
            <person name="de Sa R.G."/>
            <person name="Santelli R.V."/>
            <person name="Sawasaki H.E."/>
            <person name="da Silva A.C.R."/>
            <person name="da Silva A.M."/>
            <person name="da Silva F.R."/>
            <person name="Silva W.A. Jr."/>
            <person name="da Silveira J.F."/>
            <person name="Silvestri M.L.Z."/>
            <person name="Siqueira W.J."/>
            <person name="de Souza A.A."/>
            <person name="de Souza A.P."/>
            <person name="Terenzi M.F."/>
            <person name="Truffi D."/>
            <person name="Tsai S.M."/>
            <person name="Tsuhako M.H."/>
            <person name="Vallada H."/>
            <person name="Van Sluys M.A."/>
            <person name="Verjovski-Almeida S."/>
            <person name="Vettore A.L."/>
            <person name="Zago M.A."/>
            <person name="Zatz M."/>
            <person name="Meidanis J."/>
            <person name="Setubal J.C."/>
        </authorList>
    </citation>
    <scope>NUCLEOTIDE SEQUENCE [LARGE SCALE GENOMIC DNA]</scope>
    <source>
        <strain>9a5c</strain>
    </source>
</reference>
<protein>
    <recommendedName>
        <fullName evidence="1">3-phosphoshikimate 1-carboxyvinyltransferase</fullName>
        <ecNumber evidence="1">2.5.1.19</ecNumber>
    </recommendedName>
    <alternativeName>
        <fullName evidence="1">5-enolpyruvylshikimate-3-phosphate synthase</fullName>
        <shortName evidence="1">EPSP synthase</shortName>
        <shortName evidence="1">EPSPS</shortName>
    </alternativeName>
</protein>
<keyword id="KW-0028">Amino-acid biosynthesis</keyword>
<keyword id="KW-0057">Aromatic amino acid biosynthesis</keyword>
<keyword id="KW-0963">Cytoplasm</keyword>
<keyword id="KW-0808">Transferase</keyword>
<evidence type="ECO:0000255" key="1">
    <source>
        <dbReference type="HAMAP-Rule" id="MF_00210"/>
    </source>
</evidence>
<gene>
    <name evidence="1" type="primary">aroA</name>
    <name type="ordered locus">XF_2324</name>
</gene>
<feature type="chain" id="PRO_0000088320" description="3-phosphoshikimate 1-carboxyvinyltransferase">
    <location>
        <begin position="1"/>
        <end position="454"/>
    </location>
</feature>
<feature type="active site" description="Proton acceptor" evidence="1">
    <location>
        <position position="333"/>
    </location>
</feature>
<feature type="binding site" evidence="1">
    <location>
        <position position="39"/>
    </location>
    <ligand>
        <name>3-phosphoshikimate</name>
        <dbReference type="ChEBI" id="CHEBI:145989"/>
    </ligand>
</feature>
<feature type="binding site" evidence="1">
    <location>
        <position position="39"/>
    </location>
    <ligand>
        <name>phosphoenolpyruvate</name>
        <dbReference type="ChEBI" id="CHEBI:58702"/>
    </ligand>
</feature>
<feature type="binding site" evidence="1">
    <location>
        <position position="40"/>
    </location>
    <ligand>
        <name>3-phosphoshikimate</name>
        <dbReference type="ChEBI" id="CHEBI:145989"/>
    </ligand>
</feature>
<feature type="binding site" evidence="1">
    <location>
        <position position="44"/>
    </location>
    <ligand>
        <name>3-phosphoshikimate</name>
        <dbReference type="ChEBI" id="CHEBI:145989"/>
    </ligand>
</feature>
<feature type="binding site" evidence="1">
    <location>
        <position position="112"/>
    </location>
    <ligand>
        <name>phosphoenolpyruvate</name>
        <dbReference type="ChEBI" id="CHEBI:58702"/>
    </ligand>
</feature>
<feature type="binding site" evidence="1">
    <location>
        <position position="140"/>
    </location>
    <ligand>
        <name>phosphoenolpyruvate</name>
        <dbReference type="ChEBI" id="CHEBI:58702"/>
    </ligand>
</feature>
<feature type="binding site" evidence="1">
    <location>
        <position position="185"/>
    </location>
    <ligand>
        <name>3-phosphoshikimate</name>
        <dbReference type="ChEBI" id="CHEBI:145989"/>
    </ligand>
</feature>
<feature type="binding site" evidence="1">
    <location>
        <position position="187"/>
    </location>
    <ligand>
        <name>3-phosphoshikimate</name>
        <dbReference type="ChEBI" id="CHEBI:145989"/>
    </ligand>
</feature>
<feature type="binding site" evidence="1">
    <location>
        <position position="187"/>
    </location>
    <ligand>
        <name>phosphoenolpyruvate</name>
        <dbReference type="ChEBI" id="CHEBI:58702"/>
    </ligand>
</feature>
<feature type="binding site" evidence="1">
    <location>
        <position position="333"/>
    </location>
    <ligand>
        <name>3-phosphoshikimate</name>
        <dbReference type="ChEBI" id="CHEBI:145989"/>
    </ligand>
</feature>
<feature type="binding site" evidence="1">
    <location>
        <position position="360"/>
    </location>
    <ligand>
        <name>3-phosphoshikimate</name>
        <dbReference type="ChEBI" id="CHEBI:145989"/>
    </ligand>
</feature>
<feature type="binding site" evidence="1">
    <location>
        <position position="364"/>
    </location>
    <ligand>
        <name>phosphoenolpyruvate</name>
        <dbReference type="ChEBI" id="CHEBI:58702"/>
    </ligand>
</feature>
<feature type="binding site" evidence="1">
    <location>
        <position position="405"/>
    </location>
    <ligand>
        <name>phosphoenolpyruvate</name>
        <dbReference type="ChEBI" id="CHEBI:58702"/>
    </ligand>
</feature>
<proteinExistence type="inferred from homology"/>
<sequence length="454" mass="48267">MYCRRSHLKKPSMSHRTHDYWIAHQGTPLHGVLSIPGDKSISHRAVMFAALADGTSRIDGFLEAEDTCSTAEILARLGVRIETPLSTQRIVHGVGVDGLQASHIPLDCGNAGTGMRLLAGLLVAQPFDSVLVGDASLSKRPMRRVTDPLSQMGARIDTSDDGTPPLRIYGGQLLHGIDFISPVASAQIKSAVLLAGLYARNETVVREPHPTRDYTERMLTAFGVDIDVSTGCARLRGGQRLCATDITIPADFSSAAFYLVAASVIPGSDITLRAVGLNPRRIGLLTVLRLMGANIVESNRHEQGGEPVVDLRVRYAPLQGTRVPEDLVADMIDEFPALFVAAAAAEGQTVVSGAAELRVKESDRLAAMVTGLRVLGVQVDETADGATIHGGPIGHGTINSHGDHRIAMAFSIAGQLSVSTVRIEDVANVATSFPDYETLARSAGFGLEVYCDPA</sequence>
<name>AROA_XYLFA</name>
<dbReference type="EC" id="2.5.1.19" evidence="1"/>
<dbReference type="EMBL" id="AE003849">
    <property type="protein sequence ID" value="AAF85123.1"/>
    <property type="molecule type" value="Genomic_DNA"/>
</dbReference>
<dbReference type="PIR" id="A82572">
    <property type="entry name" value="A82572"/>
</dbReference>
<dbReference type="SMR" id="Q9PB21"/>
<dbReference type="STRING" id="160492.XF_2324"/>
<dbReference type="KEGG" id="xfa:XF_2324"/>
<dbReference type="eggNOG" id="COG0128">
    <property type="taxonomic scope" value="Bacteria"/>
</dbReference>
<dbReference type="HOGENOM" id="CLU_024321_0_1_6"/>
<dbReference type="UniPathway" id="UPA00053">
    <property type="reaction ID" value="UER00089"/>
</dbReference>
<dbReference type="Proteomes" id="UP000000812">
    <property type="component" value="Chromosome"/>
</dbReference>
<dbReference type="GO" id="GO:0005737">
    <property type="term" value="C:cytoplasm"/>
    <property type="evidence" value="ECO:0007669"/>
    <property type="project" value="UniProtKB-SubCell"/>
</dbReference>
<dbReference type="GO" id="GO:0003866">
    <property type="term" value="F:3-phosphoshikimate 1-carboxyvinyltransferase activity"/>
    <property type="evidence" value="ECO:0007669"/>
    <property type="project" value="UniProtKB-UniRule"/>
</dbReference>
<dbReference type="GO" id="GO:0008652">
    <property type="term" value="P:amino acid biosynthetic process"/>
    <property type="evidence" value="ECO:0007669"/>
    <property type="project" value="UniProtKB-KW"/>
</dbReference>
<dbReference type="GO" id="GO:0009073">
    <property type="term" value="P:aromatic amino acid family biosynthetic process"/>
    <property type="evidence" value="ECO:0007669"/>
    <property type="project" value="UniProtKB-KW"/>
</dbReference>
<dbReference type="GO" id="GO:0009423">
    <property type="term" value="P:chorismate biosynthetic process"/>
    <property type="evidence" value="ECO:0007669"/>
    <property type="project" value="UniProtKB-UniRule"/>
</dbReference>
<dbReference type="CDD" id="cd01556">
    <property type="entry name" value="EPSP_synthase"/>
    <property type="match status" value="1"/>
</dbReference>
<dbReference type="FunFam" id="3.65.10.10:FF:000005">
    <property type="entry name" value="3-phosphoshikimate 1-carboxyvinyltransferase"/>
    <property type="match status" value="1"/>
</dbReference>
<dbReference type="FunFam" id="3.65.10.10:FF:000006">
    <property type="entry name" value="3-phosphoshikimate 1-carboxyvinyltransferase"/>
    <property type="match status" value="1"/>
</dbReference>
<dbReference type="Gene3D" id="3.65.10.10">
    <property type="entry name" value="Enolpyruvate transferase domain"/>
    <property type="match status" value="2"/>
</dbReference>
<dbReference type="HAMAP" id="MF_00210">
    <property type="entry name" value="EPSP_synth"/>
    <property type="match status" value="1"/>
</dbReference>
<dbReference type="InterPro" id="IPR001986">
    <property type="entry name" value="Enolpyruvate_Tfrase_dom"/>
</dbReference>
<dbReference type="InterPro" id="IPR036968">
    <property type="entry name" value="Enolpyruvate_Tfrase_sf"/>
</dbReference>
<dbReference type="InterPro" id="IPR006264">
    <property type="entry name" value="EPSP_synthase"/>
</dbReference>
<dbReference type="InterPro" id="IPR023193">
    <property type="entry name" value="EPSP_synthase_CS"/>
</dbReference>
<dbReference type="InterPro" id="IPR013792">
    <property type="entry name" value="RNA3'P_cycl/enolpyr_Trfase_a/b"/>
</dbReference>
<dbReference type="NCBIfam" id="TIGR01356">
    <property type="entry name" value="aroA"/>
    <property type="match status" value="1"/>
</dbReference>
<dbReference type="PANTHER" id="PTHR21090">
    <property type="entry name" value="AROM/DEHYDROQUINATE SYNTHASE"/>
    <property type="match status" value="1"/>
</dbReference>
<dbReference type="PANTHER" id="PTHR21090:SF5">
    <property type="entry name" value="PENTAFUNCTIONAL AROM POLYPEPTIDE"/>
    <property type="match status" value="1"/>
</dbReference>
<dbReference type="Pfam" id="PF00275">
    <property type="entry name" value="EPSP_synthase"/>
    <property type="match status" value="1"/>
</dbReference>
<dbReference type="PIRSF" id="PIRSF000505">
    <property type="entry name" value="EPSPS"/>
    <property type="match status" value="1"/>
</dbReference>
<dbReference type="SUPFAM" id="SSF55205">
    <property type="entry name" value="EPT/RTPC-like"/>
    <property type="match status" value="1"/>
</dbReference>
<dbReference type="PROSITE" id="PS00104">
    <property type="entry name" value="EPSP_SYNTHASE_1"/>
    <property type="match status" value="1"/>
</dbReference>
<dbReference type="PROSITE" id="PS00885">
    <property type="entry name" value="EPSP_SYNTHASE_2"/>
    <property type="match status" value="1"/>
</dbReference>
<accession>Q9PB21</accession>